<keyword id="KW-0489">Methyltransferase</keyword>
<keyword id="KW-1185">Reference proteome</keyword>
<keyword id="KW-0677">Repeat</keyword>
<keyword id="KW-0949">S-adenosyl-L-methionine</keyword>
<keyword id="KW-0808">Transferase</keyword>
<sequence length="685" mass="77744">MSSFSQVRNPITGQATWQENADDYDYHQEVANAGFGDMLHDWERNQKYYAAIKKTIKRMQADGREVHVLDIGTGTGILSMMALKAGADSVTACEAFLPMANCAAKIMTANGADKIQLIRKRSTEIQIGVDMARRANLLVAELLDTELIGEGAIGIYNHAHQELLTKDALCIPARARCYAQVATSSLAKQWNGFKLMANLDGETLLRVPPQLNECKGDAALHDLQLSQLPTESFRLFSKPVEIFEFDFQQHLEPIQKQRNKVVPLQASQPGSADMVFYWWDIDLDHESEIVLSCAPFWAHPDKDKHVAGEDKPLANAIPWRDHWMQAIYYIPKPLHLSNTKETFYLSCHHDEYSLWFDAQLKEPAESIERHHCTCDLHLINPRSRIGQLNQSPRNKRYLNYLEETTTKDSQFLVLGNSCFLGLATCGLGAASVEIYDSNSLSRRLLDSFIKFNKLENVSLLEKLEDVQDHSKLTHIFAEPYFINSILPWDNFYFGTLLLSLKDKLSEGTQISPCAARIFALPMEFLDLHKIRAPVGNCEGFDLSLFDEMVKDSADKAVSSVEAQPLWEYPGRALAQPQEILRVDFANFNQELHQQGSIELIRSKECNGIALWVDWQLYSSESPKAFVTSGPSQPIEIGKFVKWDMFVRQGVHFPQTRTTNATQVEWQIDFKPFLGELNFKFDLKSI</sequence>
<feature type="chain" id="PRO_0000373921" description="Protein arginine N-methyltransferase 7">
    <location>
        <begin position="1"/>
        <end position="685"/>
    </location>
</feature>
<feature type="domain" description="SAM-dependent MTase PRMT-type 1" evidence="2">
    <location>
        <begin position="14"/>
        <end position="355"/>
    </location>
</feature>
<feature type="domain" description="SAM-dependent MTase PRMT-type 2" evidence="2">
    <location>
        <begin position="364"/>
        <end position="685"/>
    </location>
</feature>
<reference key="1">
    <citation type="journal article" date="2007" name="Nature">
        <title>Evolution of genes and genomes on the Drosophila phylogeny.</title>
        <authorList>
            <consortium name="Drosophila 12 genomes consortium"/>
        </authorList>
    </citation>
    <scope>NUCLEOTIDE SEQUENCE [LARGE SCALE GENOMIC DNA]</scope>
    <source>
        <strain>Tucson 14030-0811.24</strain>
    </source>
</reference>
<proteinExistence type="inferred from homology"/>
<dbReference type="EC" id="2.1.1.-"/>
<dbReference type="EMBL" id="CH963848">
    <property type="protein sequence ID" value="EDW73700.1"/>
    <property type="molecule type" value="Genomic_DNA"/>
</dbReference>
<dbReference type="RefSeq" id="XP_002062714.2">
    <property type="nucleotide sequence ID" value="XM_002062678.2"/>
</dbReference>
<dbReference type="SMR" id="B4MNL1"/>
<dbReference type="STRING" id="7260.B4MNL1"/>
<dbReference type="EnsemblMetazoa" id="FBtr0250251">
    <property type="protein sequence ID" value="FBpp0248743"/>
    <property type="gene ID" value="FBgn0221598"/>
</dbReference>
<dbReference type="EnsemblMetazoa" id="XM_002062678.4">
    <property type="protein sequence ID" value="XP_002062714.3"/>
    <property type="gene ID" value="LOC6639894"/>
</dbReference>
<dbReference type="GeneID" id="6639894"/>
<dbReference type="KEGG" id="dwi:6639894"/>
<dbReference type="CTD" id="37664"/>
<dbReference type="eggNOG" id="KOG1501">
    <property type="taxonomic scope" value="Eukaryota"/>
</dbReference>
<dbReference type="HOGENOM" id="CLU_015180_0_0_1"/>
<dbReference type="OMA" id="CHHDEYS"/>
<dbReference type="OrthoDB" id="412876at2759"/>
<dbReference type="PhylomeDB" id="B4MNL1"/>
<dbReference type="Proteomes" id="UP000007798">
    <property type="component" value="Unassembled WGS sequence"/>
</dbReference>
<dbReference type="GO" id="GO:0042054">
    <property type="term" value="F:histone methyltransferase activity"/>
    <property type="evidence" value="ECO:0007669"/>
    <property type="project" value="TreeGrafter"/>
</dbReference>
<dbReference type="GO" id="GO:0035243">
    <property type="term" value="F:protein-arginine omega-N symmetric methyltransferase activity"/>
    <property type="evidence" value="ECO:0000250"/>
    <property type="project" value="UniProtKB"/>
</dbReference>
<dbReference type="GO" id="GO:0018216">
    <property type="term" value="P:peptidyl-arginine methylation"/>
    <property type="evidence" value="ECO:0000250"/>
    <property type="project" value="UniProtKB"/>
</dbReference>
<dbReference type="CDD" id="cd02440">
    <property type="entry name" value="AdoMet_MTases"/>
    <property type="match status" value="1"/>
</dbReference>
<dbReference type="FunFam" id="2.70.160.11:FF:000014">
    <property type="entry name" value="Protein arginine N-methyltransferase 7"/>
    <property type="match status" value="1"/>
</dbReference>
<dbReference type="FunFam" id="2.70.160.11:FF:000019">
    <property type="entry name" value="Protein arginine N-methyltransferase 7"/>
    <property type="match status" value="1"/>
</dbReference>
<dbReference type="FunFam" id="3.40.50.150:FF:000070">
    <property type="entry name" value="Protein arginine N-methyltransferase 7"/>
    <property type="match status" value="1"/>
</dbReference>
<dbReference type="FunFam" id="3.40.50.150:FF:000071">
    <property type="entry name" value="Protein arginine N-methyltransferase 7"/>
    <property type="match status" value="1"/>
</dbReference>
<dbReference type="Gene3D" id="2.70.160.11">
    <property type="entry name" value="Hnrnp arginine n-methyltransferase1"/>
    <property type="match status" value="2"/>
</dbReference>
<dbReference type="Gene3D" id="3.40.50.150">
    <property type="entry name" value="Vaccinia Virus protein VP39"/>
    <property type="match status" value="2"/>
</dbReference>
<dbReference type="InterPro" id="IPR025799">
    <property type="entry name" value="Arg_MeTrfase"/>
</dbReference>
<dbReference type="InterPro" id="IPR014644">
    <property type="entry name" value="MeTrfase_PRMT7"/>
</dbReference>
<dbReference type="InterPro" id="IPR055135">
    <property type="entry name" value="PRMT_dom"/>
</dbReference>
<dbReference type="InterPro" id="IPR029063">
    <property type="entry name" value="SAM-dependent_MTases_sf"/>
</dbReference>
<dbReference type="PANTHER" id="PTHR11006">
    <property type="entry name" value="PROTEIN ARGININE N-METHYLTRANSFERASE"/>
    <property type="match status" value="1"/>
</dbReference>
<dbReference type="PANTHER" id="PTHR11006:SF4">
    <property type="entry name" value="PROTEIN ARGININE N-METHYLTRANSFERASE 7"/>
    <property type="match status" value="1"/>
</dbReference>
<dbReference type="Pfam" id="PF06325">
    <property type="entry name" value="PrmA"/>
    <property type="match status" value="1"/>
</dbReference>
<dbReference type="Pfam" id="PF22528">
    <property type="entry name" value="PRMT_C"/>
    <property type="match status" value="1"/>
</dbReference>
<dbReference type="PIRSF" id="PIRSF036946">
    <property type="entry name" value="Arg_N-mtase"/>
    <property type="match status" value="1"/>
</dbReference>
<dbReference type="SUPFAM" id="SSF53335">
    <property type="entry name" value="S-adenosyl-L-methionine-dependent methyltransferases"/>
    <property type="match status" value="2"/>
</dbReference>
<dbReference type="PROSITE" id="PS51678">
    <property type="entry name" value="SAM_MT_PRMT"/>
    <property type="match status" value="2"/>
</dbReference>
<evidence type="ECO:0000250" key="1"/>
<evidence type="ECO:0000255" key="2">
    <source>
        <dbReference type="PROSITE-ProRule" id="PRU01015"/>
    </source>
</evidence>
<organism>
    <name type="scientific">Drosophila willistoni</name>
    <name type="common">Fruit fly</name>
    <dbReference type="NCBI Taxonomy" id="7260"/>
    <lineage>
        <taxon>Eukaryota</taxon>
        <taxon>Metazoa</taxon>
        <taxon>Ecdysozoa</taxon>
        <taxon>Arthropoda</taxon>
        <taxon>Hexapoda</taxon>
        <taxon>Insecta</taxon>
        <taxon>Pterygota</taxon>
        <taxon>Neoptera</taxon>
        <taxon>Endopterygota</taxon>
        <taxon>Diptera</taxon>
        <taxon>Brachycera</taxon>
        <taxon>Muscomorpha</taxon>
        <taxon>Ephydroidea</taxon>
        <taxon>Drosophilidae</taxon>
        <taxon>Drosophila</taxon>
        <taxon>Sophophora</taxon>
    </lineage>
</organism>
<accession>B4MNL1</accession>
<comment type="function">
    <text evidence="1">Essential arginine methyltransferase that can both catalyze the formation of omega-N monomethylarginine (MMA) and symmetrical dimethylarginine (sDMA). Specifically mediates the symmetrical dimethylation of arginine residues in the small nuclear ribonucleoproteins SmD1 and SmD3 (By similarity).</text>
</comment>
<comment type="similarity">
    <text evidence="2">Belongs to the class I-like SAM-binding methyltransferase superfamily. Protein arginine N-methyltransferase family. PRMT7 subfamily.</text>
</comment>
<name>ANM7_DROWI</name>
<protein>
    <recommendedName>
        <fullName>Protein arginine N-methyltransferase 7</fullName>
        <ecNumber>2.1.1.-</ecNumber>
    </recommendedName>
</protein>
<gene>
    <name type="primary">Art7</name>
    <name type="ORF">GK19600</name>
</gene>